<accession>P0CH93</accession>
<accession>Q2GFK2</accession>
<organism>
    <name type="scientific">Ehrlichia chaffeensis (strain ATCC CRL-10679 / Arkansas)</name>
    <dbReference type="NCBI Taxonomy" id="205920"/>
    <lineage>
        <taxon>Bacteria</taxon>
        <taxon>Pseudomonadati</taxon>
        <taxon>Pseudomonadota</taxon>
        <taxon>Alphaproteobacteria</taxon>
        <taxon>Rickettsiales</taxon>
        <taxon>Anaplasmataceae</taxon>
        <taxon>Ehrlichia</taxon>
    </lineage>
</organism>
<protein>
    <recommendedName>
        <fullName evidence="1">Transcription termination factor Rho 2</fullName>
        <ecNumber evidence="1">3.6.4.-</ecNumber>
    </recommendedName>
    <alternativeName>
        <fullName evidence="1">ATP-dependent helicase Rho 2</fullName>
    </alternativeName>
</protein>
<comment type="function">
    <text evidence="1">Facilitates transcription termination by a mechanism that involves Rho binding to the nascent RNA, activation of Rho's RNA-dependent ATPase activity, and release of the mRNA from the DNA template.</text>
</comment>
<comment type="subunit">
    <text evidence="1">Homohexamer. The homohexamer assembles into an open ring structure.</text>
</comment>
<comment type="similarity">
    <text evidence="1">Belongs to the Rho family.</text>
</comment>
<sequence length="422" mass="46864">MLDLSELKKKTIEDLLKIAEDLGVVSNGRMLKQEIIFHLMKKVVSDGGAAIGGGVVEILSDGFGFLRSPEANYAASGDDVYISAGQIKKFNLRTGDIVSGEIRAPSEKERYFTLVKAHSINFTDMAKLQRYVHFDDLIPLYPEERILLECNDPISVSKKDISMRVIDIVAPLGKGQRALIVAPPRAGKTIILQQIAHSISVNHPDIELIVLLIGERPEEVTDMCRSVKGEVVSSTFDEPGYRHVQLAEIVIEKAKRMVEHKKNVVILLDSITRLARAYNSVIPSSGKVLTGGVDSNALQRPKRFFGAARNIENGGSLTIIATALIETGSKMDEVIFEEFKGTGNCEIILDRKISDKRVYPAIDISKSGTRKEDMLIDSVCLKKVWLLRRLLSSMGSVEAMEFLRDKLLITKDNNEFFDMMNS</sequence>
<dbReference type="EC" id="3.6.4.-" evidence="1"/>
<dbReference type="EMBL" id="CP000236">
    <property type="protein sequence ID" value="ABD44973.1"/>
    <property type="molecule type" value="Genomic_DNA"/>
</dbReference>
<dbReference type="SMR" id="P0CH93"/>
<dbReference type="KEGG" id="ech:ECH_0200"/>
<dbReference type="HOGENOM" id="CLU_016377_4_3_5"/>
<dbReference type="Proteomes" id="UP000008320">
    <property type="component" value="Chromosome"/>
</dbReference>
<dbReference type="GO" id="GO:0005829">
    <property type="term" value="C:cytosol"/>
    <property type="evidence" value="ECO:0007669"/>
    <property type="project" value="UniProtKB-ARBA"/>
</dbReference>
<dbReference type="GO" id="GO:0005524">
    <property type="term" value="F:ATP binding"/>
    <property type="evidence" value="ECO:0007669"/>
    <property type="project" value="UniProtKB-UniRule"/>
</dbReference>
<dbReference type="GO" id="GO:0016887">
    <property type="term" value="F:ATP hydrolysis activity"/>
    <property type="evidence" value="ECO:0007669"/>
    <property type="project" value="InterPro"/>
</dbReference>
<dbReference type="GO" id="GO:0008186">
    <property type="term" value="F:ATP-dependent activity, acting on RNA"/>
    <property type="evidence" value="ECO:0007669"/>
    <property type="project" value="InterPro"/>
</dbReference>
<dbReference type="GO" id="GO:0004386">
    <property type="term" value="F:helicase activity"/>
    <property type="evidence" value="ECO:0007669"/>
    <property type="project" value="UniProtKB-UniRule"/>
</dbReference>
<dbReference type="GO" id="GO:0003723">
    <property type="term" value="F:RNA binding"/>
    <property type="evidence" value="ECO:0007669"/>
    <property type="project" value="UniProtKB-UniRule"/>
</dbReference>
<dbReference type="GO" id="GO:0006353">
    <property type="term" value="P:DNA-templated transcription termination"/>
    <property type="evidence" value="ECO:0007669"/>
    <property type="project" value="UniProtKB-UniRule"/>
</dbReference>
<dbReference type="CDD" id="cd04459">
    <property type="entry name" value="Rho_CSD"/>
    <property type="match status" value="1"/>
</dbReference>
<dbReference type="CDD" id="cd01128">
    <property type="entry name" value="rho_factor_C"/>
    <property type="match status" value="1"/>
</dbReference>
<dbReference type="Gene3D" id="1.10.720.10">
    <property type="match status" value="1"/>
</dbReference>
<dbReference type="Gene3D" id="2.40.50.140">
    <property type="entry name" value="Nucleic acid-binding proteins"/>
    <property type="match status" value="1"/>
</dbReference>
<dbReference type="Gene3D" id="3.40.50.300">
    <property type="entry name" value="P-loop containing nucleotide triphosphate hydrolases"/>
    <property type="match status" value="1"/>
</dbReference>
<dbReference type="HAMAP" id="MF_01884">
    <property type="entry name" value="Rho"/>
    <property type="match status" value="1"/>
</dbReference>
<dbReference type="InterPro" id="IPR003593">
    <property type="entry name" value="AAA+_ATPase"/>
</dbReference>
<dbReference type="InterPro" id="IPR000194">
    <property type="entry name" value="ATPase_F1/V1/A1_a/bsu_nucl-bd"/>
</dbReference>
<dbReference type="InterPro" id="IPR011129">
    <property type="entry name" value="CSD"/>
</dbReference>
<dbReference type="InterPro" id="IPR012340">
    <property type="entry name" value="NA-bd_OB-fold"/>
</dbReference>
<dbReference type="InterPro" id="IPR027417">
    <property type="entry name" value="P-loop_NTPase"/>
</dbReference>
<dbReference type="InterPro" id="IPR011112">
    <property type="entry name" value="Rho-like_N"/>
</dbReference>
<dbReference type="InterPro" id="IPR041703">
    <property type="entry name" value="Rho_factor_ATP-bd"/>
</dbReference>
<dbReference type="InterPro" id="IPR036269">
    <property type="entry name" value="Rho_N_sf"/>
</dbReference>
<dbReference type="InterPro" id="IPR011113">
    <property type="entry name" value="Rho_RNA-bd"/>
</dbReference>
<dbReference type="InterPro" id="IPR004665">
    <property type="entry name" value="Term_rho"/>
</dbReference>
<dbReference type="NCBIfam" id="NF006886">
    <property type="entry name" value="PRK09376.1"/>
    <property type="match status" value="1"/>
</dbReference>
<dbReference type="NCBIfam" id="TIGR00767">
    <property type="entry name" value="rho"/>
    <property type="match status" value="1"/>
</dbReference>
<dbReference type="PANTHER" id="PTHR46425">
    <property type="entry name" value="TRANSCRIPTION TERMINATION FACTOR RHO"/>
    <property type="match status" value="1"/>
</dbReference>
<dbReference type="PANTHER" id="PTHR46425:SF1">
    <property type="entry name" value="TRANSCRIPTION TERMINATION FACTOR RHO"/>
    <property type="match status" value="1"/>
</dbReference>
<dbReference type="Pfam" id="PF00006">
    <property type="entry name" value="ATP-synt_ab"/>
    <property type="match status" value="1"/>
</dbReference>
<dbReference type="Pfam" id="PF07498">
    <property type="entry name" value="Rho_N"/>
    <property type="match status" value="1"/>
</dbReference>
<dbReference type="Pfam" id="PF07497">
    <property type="entry name" value="Rho_RNA_bind"/>
    <property type="match status" value="1"/>
</dbReference>
<dbReference type="SMART" id="SM00382">
    <property type="entry name" value="AAA"/>
    <property type="match status" value="1"/>
</dbReference>
<dbReference type="SMART" id="SM00357">
    <property type="entry name" value="CSP"/>
    <property type="match status" value="1"/>
</dbReference>
<dbReference type="SMART" id="SM00959">
    <property type="entry name" value="Rho_N"/>
    <property type="match status" value="1"/>
</dbReference>
<dbReference type="SUPFAM" id="SSF50249">
    <property type="entry name" value="Nucleic acid-binding proteins"/>
    <property type="match status" value="1"/>
</dbReference>
<dbReference type="SUPFAM" id="SSF52540">
    <property type="entry name" value="P-loop containing nucleoside triphosphate hydrolases"/>
    <property type="match status" value="1"/>
</dbReference>
<dbReference type="SUPFAM" id="SSF68912">
    <property type="entry name" value="Rho N-terminal domain-like"/>
    <property type="match status" value="1"/>
</dbReference>
<dbReference type="PROSITE" id="PS51856">
    <property type="entry name" value="RHO_RNA_BD"/>
    <property type="match status" value="1"/>
</dbReference>
<keyword id="KW-0067">ATP-binding</keyword>
<keyword id="KW-0347">Helicase</keyword>
<keyword id="KW-0378">Hydrolase</keyword>
<keyword id="KW-0547">Nucleotide-binding</keyword>
<keyword id="KW-1185">Reference proteome</keyword>
<keyword id="KW-0694">RNA-binding</keyword>
<keyword id="KW-0804">Transcription</keyword>
<keyword id="KW-0805">Transcription regulation</keyword>
<keyword id="KW-0806">Transcription termination</keyword>
<gene>
    <name evidence="1" type="primary">rho2</name>
    <name type="ordered locus">ECH_0200</name>
</gene>
<evidence type="ECO:0000255" key="1">
    <source>
        <dbReference type="HAMAP-Rule" id="MF_01884"/>
    </source>
</evidence>
<evidence type="ECO:0000255" key="2">
    <source>
        <dbReference type="PROSITE-ProRule" id="PRU01203"/>
    </source>
</evidence>
<proteinExistence type="inferred from homology"/>
<reference key="1">
    <citation type="journal article" date="2006" name="PLoS Genet.">
        <title>Comparative genomics of emerging human ehrlichiosis agents.</title>
        <authorList>
            <person name="Dunning Hotopp J.C."/>
            <person name="Lin M."/>
            <person name="Madupu R."/>
            <person name="Crabtree J."/>
            <person name="Angiuoli S.V."/>
            <person name="Eisen J.A."/>
            <person name="Seshadri R."/>
            <person name="Ren Q."/>
            <person name="Wu M."/>
            <person name="Utterback T.R."/>
            <person name="Smith S."/>
            <person name="Lewis M."/>
            <person name="Khouri H."/>
            <person name="Zhang C."/>
            <person name="Niu H."/>
            <person name="Lin Q."/>
            <person name="Ohashi N."/>
            <person name="Zhi N."/>
            <person name="Nelson W.C."/>
            <person name="Brinkac L.M."/>
            <person name="Dodson R.J."/>
            <person name="Rosovitz M.J."/>
            <person name="Sundaram J.P."/>
            <person name="Daugherty S.C."/>
            <person name="Davidsen T."/>
            <person name="Durkin A.S."/>
            <person name="Gwinn M.L."/>
            <person name="Haft D.H."/>
            <person name="Selengut J.D."/>
            <person name="Sullivan S.A."/>
            <person name="Zafar N."/>
            <person name="Zhou L."/>
            <person name="Benahmed F."/>
            <person name="Forberger H."/>
            <person name="Halpin R."/>
            <person name="Mulligan S."/>
            <person name="Robinson J."/>
            <person name="White O."/>
            <person name="Rikihisa Y."/>
            <person name="Tettelin H."/>
        </authorList>
    </citation>
    <scope>NUCLEOTIDE SEQUENCE [LARGE SCALE GENOMIC DNA]</scope>
    <source>
        <strain>ATCC CRL-10679 / Arkansas</strain>
    </source>
</reference>
<feature type="chain" id="PRO_0000398667" description="Transcription termination factor Rho 2">
    <location>
        <begin position="1"/>
        <end position="422"/>
    </location>
</feature>
<feature type="domain" description="Rho RNA-BD" evidence="2">
    <location>
        <begin position="49"/>
        <end position="124"/>
    </location>
</feature>
<feature type="binding site" evidence="1">
    <location>
        <begin position="173"/>
        <end position="178"/>
    </location>
    <ligand>
        <name>ATP</name>
        <dbReference type="ChEBI" id="CHEBI:30616"/>
    </ligand>
</feature>
<feature type="binding site" evidence="1">
    <location>
        <begin position="185"/>
        <end position="190"/>
    </location>
    <ligand>
        <name>ATP</name>
        <dbReference type="ChEBI" id="CHEBI:30616"/>
    </ligand>
</feature>
<feature type="binding site" evidence="1">
    <location>
        <position position="216"/>
    </location>
    <ligand>
        <name>ATP</name>
        <dbReference type="ChEBI" id="CHEBI:30616"/>
    </ligand>
</feature>
<name>RHO2_EHRCR</name>